<dbReference type="EMBL" id="AE014184">
    <property type="protein sequence ID" value="AAO44651.1"/>
    <property type="molecule type" value="Genomic_DNA"/>
</dbReference>
<dbReference type="RefSeq" id="WP_011096165.1">
    <property type="nucleotide sequence ID" value="NC_004572.3"/>
</dbReference>
<dbReference type="SMR" id="Q83FY6"/>
<dbReference type="STRING" id="203267.TWT_554"/>
<dbReference type="GeneID" id="67387983"/>
<dbReference type="KEGG" id="twh:TWT_554"/>
<dbReference type="eggNOG" id="COG0087">
    <property type="taxonomic scope" value="Bacteria"/>
</dbReference>
<dbReference type="HOGENOM" id="CLU_044142_4_1_11"/>
<dbReference type="OrthoDB" id="9806135at2"/>
<dbReference type="Proteomes" id="UP000002200">
    <property type="component" value="Chromosome"/>
</dbReference>
<dbReference type="GO" id="GO:0022625">
    <property type="term" value="C:cytosolic large ribosomal subunit"/>
    <property type="evidence" value="ECO:0007669"/>
    <property type="project" value="TreeGrafter"/>
</dbReference>
<dbReference type="GO" id="GO:0019843">
    <property type="term" value="F:rRNA binding"/>
    <property type="evidence" value="ECO:0007669"/>
    <property type="project" value="UniProtKB-UniRule"/>
</dbReference>
<dbReference type="GO" id="GO:0003735">
    <property type="term" value="F:structural constituent of ribosome"/>
    <property type="evidence" value="ECO:0007669"/>
    <property type="project" value="InterPro"/>
</dbReference>
<dbReference type="GO" id="GO:0006412">
    <property type="term" value="P:translation"/>
    <property type="evidence" value="ECO:0007669"/>
    <property type="project" value="UniProtKB-UniRule"/>
</dbReference>
<dbReference type="FunFam" id="2.40.30.10:FF:000004">
    <property type="entry name" value="50S ribosomal protein L3"/>
    <property type="match status" value="1"/>
</dbReference>
<dbReference type="Gene3D" id="3.30.160.810">
    <property type="match status" value="1"/>
</dbReference>
<dbReference type="Gene3D" id="2.40.30.10">
    <property type="entry name" value="Translation factors"/>
    <property type="match status" value="1"/>
</dbReference>
<dbReference type="HAMAP" id="MF_01325_B">
    <property type="entry name" value="Ribosomal_uL3_B"/>
    <property type="match status" value="1"/>
</dbReference>
<dbReference type="InterPro" id="IPR000597">
    <property type="entry name" value="Ribosomal_uL3"/>
</dbReference>
<dbReference type="InterPro" id="IPR019927">
    <property type="entry name" value="Ribosomal_uL3_bac/org-type"/>
</dbReference>
<dbReference type="InterPro" id="IPR019926">
    <property type="entry name" value="Ribosomal_uL3_CS"/>
</dbReference>
<dbReference type="InterPro" id="IPR009000">
    <property type="entry name" value="Transl_B-barrel_sf"/>
</dbReference>
<dbReference type="NCBIfam" id="TIGR03625">
    <property type="entry name" value="L3_bact"/>
    <property type="match status" value="1"/>
</dbReference>
<dbReference type="PANTHER" id="PTHR11229">
    <property type="entry name" value="50S RIBOSOMAL PROTEIN L3"/>
    <property type="match status" value="1"/>
</dbReference>
<dbReference type="PANTHER" id="PTHR11229:SF16">
    <property type="entry name" value="LARGE RIBOSOMAL SUBUNIT PROTEIN UL3C"/>
    <property type="match status" value="1"/>
</dbReference>
<dbReference type="Pfam" id="PF00297">
    <property type="entry name" value="Ribosomal_L3"/>
    <property type="match status" value="1"/>
</dbReference>
<dbReference type="SUPFAM" id="SSF50447">
    <property type="entry name" value="Translation proteins"/>
    <property type="match status" value="1"/>
</dbReference>
<dbReference type="PROSITE" id="PS00474">
    <property type="entry name" value="RIBOSOMAL_L3"/>
    <property type="match status" value="1"/>
</dbReference>
<comment type="function">
    <text evidence="1">One of the primary rRNA binding proteins, it binds directly near the 3'-end of the 23S rRNA, where it nucleates assembly of the 50S subunit.</text>
</comment>
<comment type="subunit">
    <text evidence="1">Part of the 50S ribosomal subunit. Forms a cluster with proteins L14 and L19.</text>
</comment>
<comment type="similarity">
    <text evidence="1">Belongs to the universal ribosomal protein uL3 family.</text>
</comment>
<evidence type="ECO:0000255" key="1">
    <source>
        <dbReference type="HAMAP-Rule" id="MF_01325"/>
    </source>
</evidence>
<evidence type="ECO:0000256" key="2">
    <source>
        <dbReference type="SAM" id="MobiDB-lite"/>
    </source>
</evidence>
<evidence type="ECO:0000305" key="3"/>
<reference key="1">
    <citation type="journal article" date="2003" name="Genome Res.">
        <title>Tropheryma whipplei twist: a human pathogenic Actinobacteria with a reduced genome.</title>
        <authorList>
            <person name="Raoult D."/>
            <person name="Ogata H."/>
            <person name="Audic S."/>
            <person name="Robert C."/>
            <person name="Suhre K."/>
            <person name="Drancourt M."/>
            <person name="Claverie J.-M."/>
        </authorList>
    </citation>
    <scope>NUCLEOTIDE SEQUENCE [LARGE SCALE GENOMIC DNA]</scope>
    <source>
        <strain>Twist</strain>
    </source>
</reference>
<feature type="chain" id="PRO_0000077184" description="Large ribosomal subunit protein uL3">
    <location>
        <begin position="1"/>
        <end position="210"/>
    </location>
</feature>
<feature type="region of interest" description="Disordered" evidence="2">
    <location>
        <begin position="126"/>
        <end position="150"/>
    </location>
</feature>
<protein>
    <recommendedName>
        <fullName evidence="1">Large ribosomal subunit protein uL3</fullName>
    </recommendedName>
    <alternativeName>
        <fullName evidence="3">50S ribosomal protein L3</fullName>
    </alternativeName>
</protein>
<sequence length="210" mass="22340">MARALLGTKVGMTQIWSGRRVVPVTAVAVTTNVVSQVKAPEKDGYSRLQIATGAIDPRRVNRPRKGHFAKAGLTPRRFIREVDSEGSLGDEFGPEIFQEGQLVDVVGKSKGKGFSGTMKRHNFQGVSATHGSHRNHRKPGSVGASSTPSRVFKGTRMAGRLGSSRVTVHNLRLVKIDSENGLLLVEGAVPGSSGSPVIIRDAVKGVPIVS</sequence>
<gene>
    <name evidence="1" type="primary">rplC</name>
    <name type="ordered locus">TWT_554</name>
</gene>
<organism>
    <name type="scientific">Tropheryma whipplei (strain Twist)</name>
    <name type="common">Whipple's bacillus</name>
    <dbReference type="NCBI Taxonomy" id="203267"/>
    <lineage>
        <taxon>Bacteria</taxon>
        <taxon>Bacillati</taxon>
        <taxon>Actinomycetota</taxon>
        <taxon>Actinomycetes</taxon>
        <taxon>Micrococcales</taxon>
        <taxon>Tropherymataceae</taxon>
        <taxon>Tropheryma</taxon>
    </lineage>
</organism>
<accession>Q83FY6</accession>
<name>RL3_TROWT</name>
<keyword id="KW-1185">Reference proteome</keyword>
<keyword id="KW-0687">Ribonucleoprotein</keyword>
<keyword id="KW-0689">Ribosomal protein</keyword>
<keyword id="KW-0694">RNA-binding</keyword>
<keyword id="KW-0699">rRNA-binding</keyword>
<proteinExistence type="inferred from homology"/>